<feature type="chain" id="PRO_0000094229" description="Elongation factor P 1">
    <location>
        <begin position="1"/>
        <end position="185"/>
    </location>
</feature>
<name>EFP1_CHLPN</name>
<keyword id="KW-0963">Cytoplasm</keyword>
<keyword id="KW-0251">Elongation factor</keyword>
<keyword id="KW-0648">Protein biosynthesis</keyword>
<dbReference type="EMBL" id="AE001363">
    <property type="protein sequence ID" value="AAD18337.1"/>
    <property type="molecule type" value="Genomic_DNA"/>
</dbReference>
<dbReference type="EMBL" id="AE002161">
    <property type="protein sequence ID" value="AAF38402.1"/>
    <property type="molecule type" value="Genomic_DNA"/>
</dbReference>
<dbReference type="EMBL" id="BA000008">
    <property type="protein sequence ID" value="BAA98394.1"/>
    <property type="molecule type" value="Genomic_DNA"/>
</dbReference>
<dbReference type="EMBL" id="AE009440">
    <property type="protein sequence ID" value="AAP98120.1"/>
    <property type="molecule type" value="Genomic_DNA"/>
</dbReference>
<dbReference type="PIR" id="G72110">
    <property type="entry name" value="G72110"/>
</dbReference>
<dbReference type="PIR" id="H86513">
    <property type="entry name" value="H86513"/>
</dbReference>
<dbReference type="RefSeq" id="NP_224393.1">
    <property type="nucleotide sequence ID" value="NC_000922.1"/>
</dbReference>
<dbReference type="RefSeq" id="WP_010882835.1">
    <property type="nucleotide sequence ID" value="NZ_LN847257.1"/>
</dbReference>
<dbReference type="SMR" id="Q9Z900"/>
<dbReference type="STRING" id="406984.CPK_ORF00690"/>
<dbReference type="GeneID" id="45050230"/>
<dbReference type="KEGG" id="cpa:CP_0584"/>
<dbReference type="KEGG" id="cpj:efp_1"/>
<dbReference type="KEGG" id="cpn:CPn_0184"/>
<dbReference type="KEGG" id="cpt:CpB0187"/>
<dbReference type="PATRIC" id="fig|115713.3.peg.209"/>
<dbReference type="eggNOG" id="COG0231">
    <property type="taxonomic scope" value="Bacteria"/>
</dbReference>
<dbReference type="HOGENOM" id="CLU_074944_0_1_0"/>
<dbReference type="OrthoDB" id="9801844at2"/>
<dbReference type="UniPathway" id="UPA00345"/>
<dbReference type="Proteomes" id="UP000000583">
    <property type="component" value="Chromosome"/>
</dbReference>
<dbReference type="Proteomes" id="UP000000801">
    <property type="component" value="Chromosome"/>
</dbReference>
<dbReference type="GO" id="GO:0005737">
    <property type="term" value="C:cytoplasm"/>
    <property type="evidence" value="ECO:0007669"/>
    <property type="project" value="UniProtKB-SubCell"/>
</dbReference>
<dbReference type="GO" id="GO:0003746">
    <property type="term" value="F:translation elongation factor activity"/>
    <property type="evidence" value="ECO:0007669"/>
    <property type="project" value="UniProtKB-UniRule"/>
</dbReference>
<dbReference type="GO" id="GO:0043043">
    <property type="term" value="P:peptide biosynthetic process"/>
    <property type="evidence" value="ECO:0007669"/>
    <property type="project" value="InterPro"/>
</dbReference>
<dbReference type="CDD" id="cd04470">
    <property type="entry name" value="S1_EF-P_repeat_1"/>
    <property type="match status" value="1"/>
</dbReference>
<dbReference type="CDD" id="cd05794">
    <property type="entry name" value="S1_EF-P_repeat_2"/>
    <property type="match status" value="1"/>
</dbReference>
<dbReference type="FunFam" id="2.40.50.140:FF:000004">
    <property type="entry name" value="Elongation factor P"/>
    <property type="match status" value="1"/>
</dbReference>
<dbReference type="Gene3D" id="2.30.30.30">
    <property type="match status" value="1"/>
</dbReference>
<dbReference type="Gene3D" id="2.40.50.140">
    <property type="entry name" value="Nucleic acid-binding proteins"/>
    <property type="match status" value="2"/>
</dbReference>
<dbReference type="HAMAP" id="MF_00141">
    <property type="entry name" value="EF_P"/>
    <property type="match status" value="1"/>
</dbReference>
<dbReference type="InterPro" id="IPR015365">
    <property type="entry name" value="Elong-fact-P_C"/>
</dbReference>
<dbReference type="InterPro" id="IPR012340">
    <property type="entry name" value="NA-bd_OB-fold"/>
</dbReference>
<dbReference type="InterPro" id="IPR014722">
    <property type="entry name" value="Rib_uL2_dom2"/>
</dbReference>
<dbReference type="InterPro" id="IPR020599">
    <property type="entry name" value="Transl_elong_fac_P/YeiP"/>
</dbReference>
<dbReference type="InterPro" id="IPR013185">
    <property type="entry name" value="Transl_elong_KOW-like"/>
</dbReference>
<dbReference type="InterPro" id="IPR001059">
    <property type="entry name" value="Transl_elong_P/YeiP_cen"/>
</dbReference>
<dbReference type="InterPro" id="IPR013852">
    <property type="entry name" value="Transl_elong_P/YeiP_CS"/>
</dbReference>
<dbReference type="InterPro" id="IPR011768">
    <property type="entry name" value="Transl_elongation_fac_P"/>
</dbReference>
<dbReference type="NCBIfam" id="NF009090">
    <property type="entry name" value="PRK12426.1"/>
    <property type="match status" value="1"/>
</dbReference>
<dbReference type="PANTHER" id="PTHR30053">
    <property type="entry name" value="ELONGATION FACTOR P"/>
    <property type="match status" value="1"/>
</dbReference>
<dbReference type="PANTHER" id="PTHR30053:SF12">
    <property type="entry name" value="ELONGATION FACTOR P (EF-P) FAMILY PROTEIN"/>
    <property type="match status" value="1"/>
</dbReference>
<dbReference type="Pfam" id="PF01132">
    <property type="entry name" value="EFP"/>
    <property type="match status" value="1"/>
</dbReference>
<dbReference type="Pfam" id="PF08207">
    <property type="entry name" value="EFP_N"/>
    <property type="match status" value="1"/>
</dbReference>
<dbReference type="Pfam" id="PF09285">
    <property type="entry name" value="Elong-fact-P_C"/>
    <property type="match status" value="1"/>
</dbReference>
<dbReference type="PIRSF" id="PIRSF005901">
    <property type="entry name" value="EF-P"/>
    <property type="match status" value="1"/>
</dbReference>
<dbReference type="SMART" id="SM01185">
    <property type="entry name" value="EFP"/>
    <property type="match status" value="1"/>
</dbReference>
<dbReference type="SMART" id="SM00841">
    <property type="entry name" value="Elong-fact-P_C"/>
    <property type="match status" value="1"/>
</dbReference>
<dbReference type="SUPFAM" id="SSF50249">
    <property type="entry name" value="Nucleic acid-binding proteins"/>
    <property type="match status" value="2"/>
</dbReference>
<dbReference type="PROSITE" id="PS01275">
    <property type="entry name" value="EFP"/>
    <property type="match status" value="1"/>
</dbReference>
<reference key="1">
    <citation type="journal article" date="1999" name="Nat. Genet.">
        <title>Comparative genomes of Chlamydia pneumoniae and C. trachomatis.</title>
        <authorList>
            <person name="Kalman S."/>
            <person name="Mitchell W.P."/>
            <person name="Marathe R."/>
            <person name="Lammel C.J."/>
            <person name="Fan J."/>
            <person name="Hyman R.W."/>
            <person name="Olinger L."/>
            <person name="Grimwood J."/>
            <person name="Davis R.W."/>
            <person name="Stephens R.S."/>
        </authorList>
    </citation>
    <scope>NUCLEOTIDE SEQUENCE [LARGE SCALE GENOMIC DNA]</scope>
    <source>
        <strain>CWL029</strain>
    </source>
</reference>
<reference key="2">
    <citation type="journal article" date="2000" name="Nucleic Acids Res.">
        <title>Genome sequences of Chlamydia trachomatis MoPn and Chlamydia pneumoniae AR39.</title>
        <authorList>
            <person name="Read T.D."/>
            <person name="Brunham R.C."/>
            <person name="Shen C."/>
            <person name="Gill S.R."/>
            <person name="Heidelberg J.F."/>
            <person name="White O."/>
            <person name="Hickey E.K."/>
            <person name="Peterson J.D."/>
            <person name="Utterback T.R."/>
            <person name="Berry K.J."/>
            <person name="Bass S."/>
            <person name="Linher K.D."/>
            <person name="Weidman J.F."/>
            <person name="Khouri H.M."/>
            <person name="Craven B."/>
            <person name="Bowman C."/>
            <person name="Dodson R.J."/>
            <person name="Gwinn M.L."/>
            <person name="Nelson W.C."/>
            <person name="DeBoy R.T."/>
            <person name="Kolonay J.F."/>
            <person name="McClarty G."/>
            <person name="Salzberg S.L."/>
            <person name="Eisen J.A."/>
            <person name="Fraser C.M."/>
        </authorList>
    </citation>
    <scope>NUCLEOTIDE SEQUENCE [LARGE SCALE GENOMIC DNA]</scope>
    <source>
        <strain>AR39</strain>
    </source>
</reference>
<reference key="3">
    <citation type="journal article" date="2000" name="Nucleic Acids Res.">
        <title>Comparison of whole genome sequences of Chlamydia pneumoniae J138 from Japan and CWL029 from USA.</title>
        <authorList>
            <person name="Shirai M."/>
            <person name="Hirakawa H."/>
            <person name="Kimoto M."/>
            <person name="Tabuchi M."/>
            <person name="Kishi F."/>
            <person name="Ouchi K."/>
            <person name="Shiba T."/>
            <person name="Ishii K."/>
            <person name="Hattori M."/>
            <person name="Kuhara S."/>
            <person name="Nakazawa T."/>
        </authorList>
    </citation>
    <scope>NUCLEOTIDE SEQUENCE [LARGE SCALE GENOMIC DNA]</scope>
    <source>
        <strain>J138</strain>
    </source>
</reference>
<reference key="4">
    <citation type="submission" date="2002-05" db="EMBL/GenBank/DDBJ databases">
        <title>The genome sequence of Chlamydia pneumoniae TW183 and comparison with other Chlamydia strains based on whole genome sequence analysis.</title>
        <authorList>
            <person name="Geng M.M."/>
            <person name="Schuhmacher A."/>
            <person name="Muehldorfer I."/>
            <person name="Bensch K.W."/>
            <person name="Schaefer K.P."/>
            <person name="Schneider S."/>
            <person name="Pohl T."/>
            <person name="Essig A."/>
            <person name="Marre R."/>
            <person name="Melchers K."/>
        </authorList>
    </citation>
    <scope>NUCLEOTIDE SEQUENCE [LARGE SCALE GENOMIC DNA]</scope>
    <source>
        <strain>TW-183</strain>
    </source>
</reference>
<comment type="function">
    <text evidence="1">Involved in peptide bond synthesis. Stimulates efficient translation and peptide-bond synthesis on native or reconstituted 70S ribosomes in vitro. Probably functions indirectly by altering the affinity of the ribosome for aminoacyl-tRNA, thus increasing their reactivity as acceptors for peptidyl transferase (By similarity).</text>
</comment>
<comment type="pathway">
    <text>Protein biosynthesis; polypeptide chain elongation.</text>
</comment>
<comment type="subcellular location">
    <subcellularLocation>
        <location evidence="1">Cytoplasm</location>
    </subcellularLocation>
</comment>
<comment type="similarity">
    <text evidence="2">Belongs to the elongation factor P family.</text>
</comment>
<gene>
    <name type="primary">efp1</name>
    <name type="ordered locus">CPn_0184</name>
    <name type="ordered locus">CP_0584</name>
    <name type="ordered locus">CpB0187</name>
</gene>
<proteinExistence type="inferred from homology"/>
<protein>
    <recommendedName>
        <fullName>Elongation factor P 1</fullName>
        <shortName>EF-P 1</shortName>
    </recommendedName>
</protein>
<evidence type="ECO:0000250" key="1"/>
<evidence type="ECO:0000305" key="2"/>
<accession>Q9Z900</accession>
<accession>Q9JQ76</accession>
<organism>
    <name type="scientific">Chlamydia pneumoniae</name>
    <name type="common">Chlamydophila pneumoniae</name>
    <dbReference type="NCBI Taxonomy" id="83558"/>
    <lineage>
        <taxon>Bacteria</taxon>
        <taxon>Pseudomonadati</taxon>
        <taxon>Chlamydiota</taxon>
        <taxon>Chlamydiia</taxon>
        <taxon>Chlamydiales</taxon>
        <taxon>Chlamydiaceae</taxon>
        <taxon>Chlamydia/Chlamydophila group</taxon>
        <taxon>Chlamydia</taxon>
    </lineage>
</organism>
<sequence length="185" mass="20673">MVLSSQLSVGMFISTKDGLYKVTSVSKVAGPKGESFIKVALQAADSDVVIERNFKATQEVKEAQFETRTLEYLYLEDESYLFLDLGNYEKLFIPQEIMKDNFLFLKAGVTVSAMVYDNVVFSVELPHFLELMVSKTDFPGDSLSLSGGVKKALLETGIEVMVPPFVEIGDVIKIDTRTCEYIQRV</sequence>